<feature type="chain" id="PRO_1000079784" description="Large ribosomal subunit protein bL12">
    <location>
        <begin position="1"/>
        <end position="126"/>
    </location>
</feature>
<proteinExistence type="inferred from homology"/>
<organism>
    <name type="scientific">Caulobacter sp. (strain K31)</name>
    <dbReference type="NCBI Taxonomy" id="366602"/>
    <lineage>
        <taxon>Bacteria</taxon>
        <taxon>Pseudomonadati</taxon>
        <taxon>Pseudomonadota</taxon>
        <taxon>Alphaproteobacteria</taxon>
        <taxon>Caulobacterales</taxon>
        <taxon>Caulobacteraceae</taxon>
        <taxon>Caulobacter</taxon>
    </lineage>
</organism>
<reference key="1">
    <citation type="submission" date="2008-01" db="EMBL/GenBank/DDBJ databases">
        <title>Complete sequence of chromosome of Caulobacter sp. K31.</title>
        <authorList>
            <consortium name="US DOE Joint Genome Institute"/>
            <person name="Copeland A."/>
            <person name="Lucas S."/>
            <person name="Lapidus A."/>
            <person name="Barry K."/>
            <person name="Glavina del Rio T."/>
            <person name="Dalin E."/>
            <person name="Tice H."/>
            <person name="Pitluck S."/>
            <person name="Bruce D."/>
            <person name="Goodwin L."/>
            <person name="Thompson L.S."/>
            <person name="Brettin T."/>
            <person name="Detter J.C."/>
            <person name="Han C."/>
            <person name="Schmutz J."/>
            <person name="Larimer F."/>
            <person name="Land M."/>
            <person name="Hauser L."/>
            <person name="Kyrpides N."/>
            <person name="Kim E."/>
            <person name="Stephens C."/>
            <person name="Richardson P."/>
        </authorList>
    </citation>
    <scope>NUCLEOTIDE SEQUENCE [LARGE SCALE GENOMIC DNA]</scope>
    <source>
        <strain>K31</strain>
    </source>
</reference>
<sequence>MSKLEKLVEELSALSVLEAADLSKLLEEKWGVSAAAPVAAAGPAAAAAPAEAAEEQTEFTVVLTAGGDKKINVIKEVRGVRPDLGLKEAKDLVEGAPQNVVENVSKQVAEEIAKKLTEAGATVQVK</sequence>
<accession>B0SUP3</accession>
<evidence type="ECO:0000255" key="1">
    <source>
        <dbReference type="HAMAP-Rule" id="MF_00368"/>
    </source>
</evidence>
<evidence type="ECO:0000305" key="2"/>
<protein>
    <recommendedName>
        <fullName evidence="1">Large ribosomal subunit protein bL12</fullName>
    </recommendedName>
    <alternativeName>
        <fullName evidence="2">50S ribosomal protein L7/L12</fullName>
    </alternativeName>
</protein>
<dbReference type="EMBL" id="CP000927">
    <property type="protein sequence ID" value="ABZ69921.1"/>
    <property type="molecule type" value="Genomic_DNA"/>
</dbReference>
<dbReference type="SMR" id="B0SUP3"/>
<dbReference type="STRING" id="366602.Caul_0790"/>
<dbReference type="KEGG" id="cak:Caul_0790"/>
<dbReference type="eggNOG" id="COG0222">
    <property type="taxonomic scope" value="Bacteria"/>
</dbReference>
<dbReference type="HOGENOM" id="CLU_086499_3_0_5"/>
<dbReference type="OrthoDB" id="9811748at2"/>
<dbReference type="GO" id="GO:0022625">
    <property type="term" value="C:cytosolic large ribosomal subunit"/>
    <property type="evidence" value="ECO:0007669"/>
    <property type="project" value="TreeGrafter"/>
</dbReference>
<dbReference type="GO" id="GO:0003729">
    <property type="term" value="F:mRNA binding"/>
    <property type="evidence" value="ECO:0007669"/>
    <property type="project" value="TreeGrafter"/>
</dbReference>
<dbReference type="GO" id="GO:0003735">
    <property type="term" value="F:structural constituent of ribosome"/>
    <property type="evidence" value="ECO:0007669"/>
    <property type="project" value="InterPro"/>
</dbReference>
<dbReference type="GO" id="GO:0006412">
    <property type="term" value="P:translation"/>
    <property type="evidence" value="ECO:0007669"/>
    <property type="project" value="UniProtKB-UniRule"/>
</dbReference>
<dbReference type="CDD" id="cd00387">
    <property type="entry name" value="Ribosomal_L7_L12"/>
    <property type="match status" value="1"/>
</dbReference>
<dbReference type="FunFam" id="3.30.1390.10:FF:000001">
    <property type="entry name" value="50S ribosomal protein L7/L12"/>
    <property type="match status" value="1"/>
</dbReference>
<dbReference type="Gene3D" id="3.30.1390.10">
    <property type="match status" value="1"/>
</dbReference>
<dbReference type="Gene3D" id="1.20.5.710">
    <property type="entry name" value="Single helix bin"/>
    <property type="match status" value="1"/>
</dbReference>
<dbReference type="HAMAP" id="MF_00368">
    <property type="entry name" value="Ribosomal_bL12"/>
    <property type="match status" value="1"/>
</dbReference>
<dbReference type="InterPro" id="IPR000206">
    <property type="entry name" value="Ribosomal_bL12"/>
</dbReference>
<dbReference type="InterPro" id="IPR013823">
    <property type="entry name" value="Ribosomal_bL12_C"/>
</dbReference>
<dbReference type="InterPro" id="IPR014719">
    <property type="entry name" value="Ribosomal_bL12_C/ClpS-like"/>
</dbReference>
<dbReference type="InterPro" id="IPR008932">
    <property type="entry name" value="Ribosomal_bL12_oligo"/>
</dbReference>
<dbReference type="InterPro" id="IPR036235">
    <property type="entry name" value="Ribosomal_bL12_oligo_N_sf"/>
</dbReference>
<dbReference type="NCBIfam" id="TIGR00855">
    <property type="entry name" value="L12"/>
    <property type="match status" value="1"/>
</dbReference>
<dbReference type="PANTHER" id="PTHR45987">
    <property type="entry name" value="39S RIBOSOMAL PROTEIN L12"/>
    <property type="match status" value="1"/>
</dbReference>
<dbReference type="PANTHER" id="PTHR45987:SF4">
    <property type="entry name" value="LARGE RIBOSOMAL SUBUNIT PROTEIN BL12M"/>
    <property type="match status" value="1"/>
</dbReference>
<dbReference type="Pfam" id="PF00542">
    <property type="entry name" value="Ribosomal_L12"/>
    <property type="match status" value="1"/>
</dbReference>
<dbReference type="Pfam" id="PF16320">
    <property type="entry name" value="Ribosomal_L12_N"/>
    <property type="match status" value="1"/>
</dbReference>
<dbReference type="SUPFAM" id="SSF54736">
    <property type="entry name" value="ClpS-like"/>
    <property type="match status" value="1"/>
</dbReference>
<dbReference type="SUPFAM" id="SSF48300">
    <property type="entry name" value="Ribosomal protein L7/12, oligomerisation (N-terminal) domain"/>
    <property type="match status" value="1"/>
</dbReference>
<keyword id="KW-0687">Ribonucleoprotein</keyword>
<keyword id="KW-0689">Ribosomal protein</keyword>
<comment type="function">
    <text evidence="1">Forms part of the ribosomal stalk which helps the ribosome interact with GTP-bound translation factors. Is thus essential for accurate translation.</text>
</comment>
<comment type="subunit">
    <text evidence="1">Homodimer. Part of the ribosomal stalk of the 50S ribosomal subunit. Forms a multimeric L10(L12)X complex, where L10 forms an elongated spine to which 2 to 4 L12 dimers bind in a sequential fashion. Binds GTP-bound translation factors.</text>
</comment>
<comment type="similarity">
    <text evidence="1">Belongs to the bacterial ribosomal protein bL12 family.</text>
</comment>
<name>RL7_CAUSK</name>
<gene>
    <name evidence="1" type="primary">rplL</name>
    <name type="ordered locus">Caul_0790</name>
</gene>